<dbReference type="EC" id="3.1.-.-" evidence="1"/>
<dbReference type="EMBL" id="CP000036">
    <property type="protein sequence ID" value="ABB65222.1"/>
    <property type="molecule type" value="Genomic_DNA"/>
</dbReference>
<dbReference type="RefSeq" id="WP_000084469.1">
    <property type="nucleotide sequence ID" value="NC_007613.1"/>
</dbReference>
<dbReference type="SMR" id="Q324N6"/>
<dbReference type="GeneID" id="93776823"/>
<dbReference type="KEGG" id="sbo:SBO_0523"/>
<dbReference type="HOGENOM" id="CLU_106710_0_1_6"/>
<dbReference type="Proteomes" id="UP000007067">
    <property type="component" value="Chromosome"/>
</dbReference>
<dbReference type="GO" id="GO:0005737">
    <property type="term" value="C:cytoplasm"/>
    <property type="evidence" value="ECO:0007669"/>
    <property type="project" value="UniProtKB-SubCell"/>
</dbReference>
<dbReference type="GO" id="GO:0004222">
    <property type="term" value="F:metalloendopeptidase activity"/>
    <property type="evidence" value="ECO:0007669"/>
    <property type="project" value="InterPro"/>
</dbReference>
<dbReference type="GO" id="GO:0004521">
    <property type="term" value="F:RNA endonuclease activity"/>
    <property type="evidence" value="ECO:0007669"/>
    <property type="project" value="UniProtKB-UniRule"/>
</dbReference>
<dbReference type="GO" id="GO:0008270">
    <property type="term" value="F:zinc ion binding"/>
    <property type="evidence" value="ECO:0007669"/>
    <property type="project" value="UniProtKB-UniRule"/>
</dbReference>
<dbReference type="GO" id="GO:0006364">
    <property type="term" value="P:rRNA processing"/>
    <property type="evidence" value="ECO:0007669"/>
    <property type="project" value="UniProtKB-UniRule"/>
</dbReference>
<dbReference type="FunFam" id="3.40.390.30:FF:000001">
    <property type="entry name" value="Endoribonuclease YbeY"/>
    <property type="match status" value="1"/>
</dbReference>
<dbReference type="Gene3D" id="3.40.390.30">
    <property type="entry name" value="Metalloproteases ('zincins'), catalytic domain"/>
    <property type="match status" value="1"/>
</dbReference>
<dbReference type="HAMAP" id="MF_00009">
    <property type="entry name" value="Endoribonucl_YbeY"/>
    <property type="match status" value="1"/>
</dbReference>
<dbReference type="InterPro" id="IPR023091">
    <property type="entry name" value="MetalPrtase_cat_dom_sf_prd"/>
</dbReference>
<dbReference type="InterPro" id="IPR002036">
    <property type="entry name" value="YbeY"/>
</dbReference>
<dbReference type="InterPro" id="IPR020549">
    <property type="entry name" value="YbeY_CS"/>
</dbReference>
<dbReference type="NCBIfam" id="TIGR00043">
    <property type="entry name" value="rRNA maturation RNase YbeY"/>
    <property type="match status" value="1"/>
</dbReference>
<dbReference type="PANTHER" id="PTHR46986">
    <property type="entry name" value="ENDORIBONUCLEASE YBEY, CHLOROPLASTIC"/>
    <property type="match status" value="1"/>
</dbReference>
<dbReference type="PANTHER" id="PTHR46986:SF1">
    <property type="entry name" value="ENDORIBONUCLEASE YBEY, CHLOROPLASTIC"/>
    <property type="match status" value="1"/>
</dbReference>
<dbReference type="Pfam" id="PF02130">
    <property type="entry name" value="YbeY"/>
    <property type="match status" value="1"/>
</dbReference>
<dbReference type="SUPFAM" id="SSF55486">
    <property type="entry name" value="Metalloproteases ('zincins'), catalytic domain"/>
    <property type="match status" value="1"/>
</dbReference>
<dbReference type="PROSITE" id="PS01306">
    <property type="entry name" value="UPF0054"/>
    <property type="match status" value="1"/>
</dbReference>
<protein>
    <recommendedName>
        <fullName evidence="1">Endoribonuclease YbeY</fullName>
        <ecNumber evidence="1">3.1.-.-</ecNumber>
    </recommendedName>
</protein>
<comment type="function">
    <text evidence="1">Single strand-specific metallo-endoribonuclease involved in late-stage 70S ribosome quality control and in maturation of the 3' terminus of the 16S rRNA.</text>
</comment>
<comment type="cofactor">
    <cofactor evidence="1">
        <name>Zn(2+)</name>
        <dbReference type="ChEBI" id="CHEBI:29105"/>
    </cofactor>
    <text evidence="1">Binds 1 zinc ion.</text>
</comment>
<comment type="subcellular location">
    <subcellularLocation>
        <location evidence="1">Cytoplasm</location>
    </subcellularLocation>
</comment>
<comment type="similarity">
    <text evidence="1">Belongs to the endoribonuclease YbeY family.</text>
</comment>
<gene>
    <name evidence="1" type="primary">ybeY</name>
    <name type="ordered locus">SBO_0523</name>
</gene>
<keyword id="KW-0963">Cytoplasm</keyword>
<keyword id="KW-0255">Endonuclease</keyword>
<keyword id="KW-0378">Hydrolase</keyword>
<keyword id="KW-0479">Metal-binding</keyword>
<keyword id="KW-0540">Nuclease</keyword>
<keyword id="KW-0690">Ribosome biogenesis</keyword>
<keyword id="KW-0698">rRNA processing</keyword>
<keyword id="KW-0862">Zinc</keyword>
<feature type="chain" id="PRO_0000284310" description="Endoribonuclease YbeY">
    <location>
        <begin position="1"/>
        <end position="155"/>
    </location>
</feature>
<feature type="binding site" evidence="1">
    <location>
        <position position="114"/>
    </location>
    <ligand>
        <name>Zn(2+)</name>
        <dbReference type="ChEBI" id="CHEBI:29105"/>
        <note>catalytic</note>
    </ligand>
</feature>
<feature type="binding site" evidence="1">
    <location>
        <position position="118"/>
    </location>
    <ligand>
        <name>Zn(2+)</name>
        <dbReference type="ChEBI" id="CHEBI:29105"/>
        <note>catalytic</note>
    </ligand>
</feature>
<feature type="binding site" evidence="1">
    <location>
        <position position="124"/>
    </location>
    <ligand>
        <name>Zn(2+)</name>
        <dbReference type="ChEBI" id="CHEBI:29105"/>
        <note>catalytic</note>
    </ligand>
</feature>
<proteinExistence type="inferred from homology"/>
<evidence type="ECO:0000255" key="1">
    <source>
        <dbReference type="HAMAP-Rule" id="MF_00009"/>
    </source>
</evidence>
<organism>
    <name type="scientific">Shigella boydii serotype 4 (strain Sb227)</name>
    <dbReference type="NCBI Taxonomy" id="300268"/>
    <lineage>
        <taxon>Bacteria</taxon>
        <taxon>Pseudomonadati</taxon>
        <taxon>Pseudomonadota</taxon>
        <taxon>Gammaproteobacteria</taxon>
        <taxon>Enterobacterales</taxon>
        <taxon>Enterobacteriaceae</taxon>
        <taxon>Shigella</taxon>
    </lineage>
</organism>
<accession>Q324N6</accession>
<reference key="1">
    <citation type="journal article" date="2005" name="Nucleic Acids Res.">
        <title>Genome dynamics and diversity of Shigella species, the etiologic agents of bacillary dysentery.</title>
        <authorList>
            <person name="Yang F."/>
            <person name="Yang J."/>
            <person name="Zhang X."/>
            <person name="Chen L."/>
            <person name="Jiang Y."/>
            <person name="Yan Y."/>
            <person name="Tang X."/>
            <person name="Wang J."/>
            <person name="Xiong Z."/>
            <person name="Dong J."/>
            <person name="Xue Y."/>
            <person name="Zhu Y."/>
            <person name="Xu X."/>
            <person name="Sun L."/>
            <person name="Chen S."/>
            <person name="Nie H."/>
            <person name="Peng J."/>
            <person name="Xu J."/>
            <person name="Wang Y."/>
            <person name="Yuan Z."/>
            <person name="Wen Y."/>
            <person name="Yao Z."/>
            <person name="Shen Y."/>
            <person name="Qiang B."/>
            <person name="Hou Y."/>
            <person name="Yu J."/>
            <person name="Jin Q."/>
        </authorList>
    </citation>
    <scope>NUCLEOTIDE SEQUENCE [LARGE SCALE GENOMIC DNA]</scope>
    <source>
        <strain>Sb227</strain>
    </source>
</reference>
<sequence>MSQVILDLQLACEDNSGLPEESQFQTWLNAVIPQFQEESEVTIRVVDTAESHSLNLTYRGKDKPTNVLSFPFEVPPGMEMSLLGDLVICRQVVEKEAQEQGKPLEAHWAHMVVHGSLHLLGYDHIEDDEAEEMEALETEIMLALGYEDPYIAEKE</sequence>
<name>YBEY_SHIBS</name>